<reference key="1">
    <citation type="journal article" date="2004" name="Comp. Biochem. Physiol.">
        <title>A novel disintegrin, jerdonatin, inhibits platelet aggregation and sperm-egg binding.</title>
        <authorList>
            <person name="Zhou X.-D."/>
            <person name="Ding C.-H."/>
            <person name="Tai H."/>
            <person name="Jin Y."/>
            <person name="Chen R.-Q."/>
            <person name="Lu Q.-M."/>
            <person name="Wang W.-Y."/>
            <person name="Xiong Y.-L."/>
        </authorList>
    </citation>
    <scope>NUCLEOTIDE SEQUENCE [MRNA]</scope>
    <scope>PROTEIN SEQUENCE OF 412-436</scope>
    <scope>FUNCTION</scope>
    <scope>MASS SPECTROMETRY</scope>
    <scope>SUBCELLULAR LOCATION</scope>
    <source>
        <tissue>Venom</tissue>
        <tissue>Venom gland</tissue>
    </source>
</reference>
<keyword id="KW-1217">Cell adhesion impairing toxin</keyword>
<keyword id="KW-0903">Direct protein sequencing</keyword>
<keyword id="KW-1015">Disulfide bond</keyword>
<keyword id="KW-1199">Hemostasis impairing toxin</keyword>
<keyword id="KW-0378">Hydrolase</keyword>
<keyword id="KW-0479">Metal-binding</keyword>
<keyword id="KW-0482">Metalloprotease</keyword>
<keyword id="KW-1201">Platelet aggregation inhibiting toxin</keyword>
<keyword id="KW-0645">Protease</keyword>
<keyword id="KW-0964">Secreted</keyword>
<keyword id="KW-0732">Signal</keyword>
<keyword id="KW-0800">Toxin</keyword>
<keyword id="KW-0862">Zinc</keyword>
<keyword id="KW-0865">Zymogen</keyword>
<feature type="signal peptide" evidence="3">
    <location>
        <begin position="1"/>
        <end position="20"/>
    </location>
</feature>
<feature type="propeptide" id="PRO_0000321890" evidence="1">
    <location>
        <begin position="21"/>
        <end position="190"/>
    </location>
</feature>
<feature type="chain" id="PRO_0000321891" description="Snake venom metalloproteinase">
    <location>
        <begin position="191"/>
        <end position="395"/>
    </location>
</feature>
<feature type="propeptide" id="PRO_0000321892" evidence="6">
    <location>
        <begin position="396"/>
        <end position="411"/>
    </location>
</feature>
<feature type="chain" id="PRO_0000321893" description="Disintegrin jerdonatin" evidence="8">
    <location>
        <begin position="412"/>
        <end position="483"/>
    </location>
</feature>
<feature type="domain" description="Peptidase M12B" evidence="5">
    <location>
        <begin position="197"/>
        <end position="395"/>
    </location>
</feature>
<feature type="domain" description="Disintegrin" evidence="4">
    <location>
        <begin position="403"/>
        <end position="483"/>
    </location>
</feature>
<feature type="short sequence motif" description="Cell attachment site">
    <location>
        <begin position="462"/>
        <end position="464"/>
    </location>
</feature>
<feature type="active site" evidence="5">
    <location>
        <position position="334"/>
    </location>
</feature>
<feature type="binding site" evidence="5">
    <location>
        <position position="333"/>
    </location>
    <ligand>
        <name>Zn(2+)</name>
        <dbReference type="ChEBI" id="CHEBI:29105"/>
        <note>catalytic</note>
    </ligand>
</feature>
<feature type="binding site" evidence="5">
    <location>
        <position position="337"/>
    </location>
    <ligand>
        <name>Zn(2+)</name>
        <dbReference type="ChEBI" id="CHEBI:29105"/>
        <note>catalytic</note>
    </ligand>
</feature>
<feature type="binding site" evidence="5">
    <location>
        <position position="343"/>
    </location>
    <ligand>
        <name>Zn(2+)</name>
        <dbReference type="ChEBI" id="CHEBI:29105"/>
        <note>catalytic</note>
    </ligand>
</feature>
<feature type="disulfide bond" evidence="5">
    <location>
        <begin position="308"/>
        <end position="390"/>
    </location>
</feature>
<feature type="disulfide bond" evidence="5">
    <location>
        <begin position="352"/>
        <end position="374"/>
    </location>
</feature>
<feature type="disulfide bond" evidence="5">
    <location>
        <begin position="354"/>
        <end position="357"/>
    </location>
</feature>
<feature type="disulfide bond" evidence="2">
    <location>
        <begin position="417"/>
        <end position="432"/>
    </location>
</feature>
<feature type="disulfide bond" evidence="2">
    <location>
        <begin position="419"/>
        <end position="427"/>
    </location>
</feature>
<feature type="disulfide bond" evidence="2">
    <location>
        <begin position="426"/>
        <end position="449"/>
    </location>
</feature>
<feature type="disulfide bond" evidence="2">
    <location>
        <begin position="440"/>
        <end position="446"/>
    </location>
</feature>
<feature type="disulfide bond" evidence="2">
    <location>
        <begin position="445"/>
        <end position="470"/>
    </location>
</feature>
<feature type="disulfide bond" evidence="2 4">
    <location>
        <begin position="458"/>
        <end position="477"/>
    </location>
</feature>
<proteinExistence type="evidence at protein level"/>
<sequence length="483" mass="54880">MIQVLLVTVCLAVFPYQGSSIILESGNVNDYEVVYPRKVTALPKRAVQQKYEDAMQYEFKVNGEPVVLHLEKNKGLFSEDYSETHYSPDGREITTYPSVEDHCYYHGRIHNDADSTASISACDGLKGYFKLQGETYLIEPLKLPDSEAHAVYKYENIEKEDEAPKMCGVTQNWESDESIKKASQLYLTPEQQRFPQRYVKLAIVVDYGMYTKYNRDSDKITVRVHEMVNHITEMYRPLNIDITLSLLDVWSEKDLITVQSDSDVTLEVFGDWRESVLLKRRSHDCAHLLTDTKLNDNTIGVAYKKGMCDPKLSVGLVQDYSKNVFMVAVTMTHEIGHNLGMEHDEDKNGKKCKCDTCIMSPVISDKQSKLFSDCSKNDYQTFLTNYKPQCILNAPLRTDTVSTPVSGNELLEEGEDCYCHIPPNPCCDPATCKLTPGSQCAEGLCCDQCRFKKKGTICRFARGDYPDDRCTGLSDDCPRWNDL</sequence>
<organism>
    <name type="scientific">Protobothrops jerdonii</name>
    <name type="common">Jerdon's pitviper</name>
    <name type="synonym">Trimeresurus jerdonii</name>
    <dbReference type="NCBI Taxonomy" id="242841"/>
    <lineage>
        <taxon>Eukaryota</taxon>
        <taxon>Metazoa</taxon>
        <taxon>Chordata</taxon>
        <taxon>Craniata</taxon>
        <taxon>Vertebrata</taxon>
        <taxon>Euteleostomi</taxon>
        <taxon>Lepidosauria</taxon>
        <taxon>Squamata</taxon>
        <taxon>Bifurcata</taxon>
        <taxon>Unidentata</taxon>
        <taxon>Episquamata</taxon>
        <taxon>Toxicofera</taxon>
        <taxon>Serpentes</taxon>
        <taxon>Colubroidea</taxon>
        <taxon>Viperidae</taxon>
        <taxon>Crotalinae</taxon>
        <taxon>Protobothrops</taxon>
    </lineage>
</organism>
<protein>
    <recommendedName>
        <fullName>Zinc metalloproteinase/disintegrin</fullName>
    </recommendedName>
    <component>
        <recommendedName>
            <fullName>Snake venom metalloproteinase</fullName>
            <shortName>SVMP</shortName>
            <ecNumber>3.4.24.-</ecNumber>
        </recommendedName>
    </component>
    <component>
        <recommendedName>
            <fullName>Disintegrin jerdonatin</fullName>
        </recommendedName>
    </component>
</protein>
<comment type="function">
    <molecule>Snake venom metalloproteinase</molecule>
    <text evidence="1">Impairs hemostasis in the envenomed animal.</text>
</comment>
<comment type="function">
    <molecule>Disintegrin jerdonatin</molecule>
    <text evidence="6">Inhibits ADP- and collagen-induced human platelet aggregation with IC(50) of 123 and 135 nM, respectively. Inhibits sperm-egg binding in a concentration-dependent manner, but has no effect on the fusion of sperm-egg.</text>
</comment>
<comment type="cofactor">
    <cofactor evidence="1">
        <name>Zn(2+)</name>
        <dbReference type="ChEBI" id="CHEBI:29105"/>
    </cofactor>
    <text evidence="1">Binds 1 zinc ion per subunit.</text>
</comment>
<comment type="subunit">
    <text evidence="1">Monomer.</text>
</comment>
<comment type="subcellular location">
    <subcellularLocation>
        <location evidence="6">Secreted</location>
    </subcellularLocation>
</comment>
<comment type="tissue specificity">
    <text evidence="8">Expressed by the venom gland.</text>
</comment>
<comment type="mass spectrometry" mass="8011.0" method="MALDI" evidence="6">
    <molecule>Disintegrin jerdonatin</molecule>
</comment>
<comment type="miscellaneous">
    <text>The disintegrin belongs to the medium disintegrin subfamily.</text>
</comment>
<comment type="similarity">
    <text evidence="7">Belongs to the venom metalloproteinase (M12B) family. P-II subfamily. P-IIa sub-subfamily.</text>
</comment>
<evidence type="ECO:0000250" key="1"/>
<evidence type="ECO:0000250" key="2">
    <source>
        <dbReference type="UniProtKB" id="Q0NZX5"/>
    </source>
</evidence>
<evidence type="ECO:0000255" key="3"/>
<evidence type="ECO:0000255" key="4">
    <source>
        <dbReference type="PROSITE-ProRule" id="PRU00068"/>
    </source>
</evidence>
<evidence type="ECO:0000255" key="5">
    <source>
        <dbReference type="PROSITE-ProRule" id="PRU00276"/>
    </source>
</evidence>
<evidence type="ECO:0000269" key="6">
    <source>
    </source>
</evidence>
<evidence type="ECO:0000305" key="7"/>
<evidence type="ECO:0000305" key="8">
    <source>
    </source>
</evidence>
<dbReference type="EC" id="3.4.24.-"/>
<dbReference type="SMR" id="P0C6E4"/>
<dbReference type="GO" id="GO:0005576">
    <property type="term" value="C:extracellular region"/>
    <property type="evidence" value="ECO:0007669"/>
    <property type="project" value="UniProtKB-SubCell"/>
</dbReference>
<dbReference type="GO" id="GO:0005886">
    <property type="term" value="C:plasma membrane"/>
    <property type="evidence" value="ECO:0007669"/>
    <property type="project" value="TreeGrafter"/>
</dbReference>
<dbReference type="GO" id="GO:0046872">
    <property type="term" value="F:metal ion binding"/>
    <property type="evidence" value="ECO:0007669"/>
    <property type="project" value="UniProtKB-KW"/>
</dbReference>
<dbReference type="GO" id="GO:0004222">
    <property type="term" value="F:metalloendopeptidase activity"/>
    <property type="evidence" value="ECO:0007669"/>
    <property type="project" value="InterPro"/>
</dbReference>
<dbReference type="GO" id="GO:0090729">
    <property type="term" value="F:toxin activity"/>
    <property type="evidence" value="ECO:0007669"/>
    <property type="project" value="UniProtKB-KW"/>
</dbReference>
<dbReference type="GO" id="GO:0006508">
    <property type="term" value="P:proteolysis"/>
    <property type="evidence" value="ECO:0007669"/>
    <property type="project" value="UniProtKB-KW"/>
</dbReference>
<dbReference type="CDD" id="cd04269">
    <property type="entry name" value="ZnMc_adamalysin_II_like"/>
    <property type="match status" value="1"/>
</dbReference>
<dbReference type="FunFam" id="3.40.390.10:FF:000002">
    <property type="entry name" value="Disintegrin and metalloproteinase domain-containing protein 22"/>
    <property type="match status" value="1"/>
</dbReference>
<dbReference type="FunFam" id="4.10.70.10:FF:000005">
    <property type="entry name" value="Zinc metalloproteinase/disintegrin"/>
    <property type="match status" value="1"/>
</dbReference>
<dbReference type="Gene3D" id="3.40.390.10">
    <property type="entry name" value="Collagenase (Catalytic Domain)"/>
    <property type="match status" value="1"/>
</dbReference>
<dbReference type="Gene3D" id="4.10.70.10">
    <property type="entry name" value="Disintegrin domain"/>
    <property type="match status" value="1"/>
</dbReference>
<dbReference type="InterPro" id="IPR018358">
    <property type="entry name" value="Disintegrin_CS"/>
</dbReference>
<dbReference type="InterPro" id="IPR001762">
    <property type="entry name" value="Disintegrin_dom"/>
</dbReference>
<dbReference type="InterPro" id="IPR036436">
    <property type="entry name" value="Disintegrin_dom_sf"/>
</dbReference>
<dbReference type="InterPro" id="IPR024079">
    <property type="entry name" value="MetalloPept_cat_dom_sf"/>
</dbReference>
<dbReference type="InterPro" id="IPR001590">
    <property type="entry name" value="Peptidase_M12B"/>
</dbReference>
<dbReference type="InterPro" id="IPR002870">
    <property type="entry name" value="Peptidase_M12B_N"/>
</dbReference>
<dbReference type="InterPro" id="IPR034027">
    <property type="entry name" value="Reprolysin_adamalysin"/>
</dbReference>
<dbReference type="PANTHER" id="PTHR11905">
    <property type="entry name" value="ADAM A DISINTEGRIN AND METALLOPROTEASE DOMAIN"/>
    <property type="match status" value="1"/>
</dbReference>
<dbReference type="PANTHER" id="PTHR11905:SF32">
    <property type="entry name" value="DISINTEGRIN AND METALLOPROTEINASE DOMAIN-CONTAINING PROTEIN 28"/>
    <property type="match status" value="1"/>
</dbReference>
<dbReference type="Pfam" id="PF00200">
    <property type="entry name" value="Disintegrin"/>
    <property type="match status" value="1"/>
</dbReference>
<dbReference type="Pfam" id="PF01562">
    <property type="entry name" value="Pep_M12B_propep"/>
    <property type="match status" value="1"/>
</dbReference>
<dbReference type="Pfam" id="PF01421">
    <property type="entry name" value="Reprolysin"/>
    <property type="match status" value="1"/>
</dbReference>
<dbReference type="PRINTS" id="PR00289">
    <property type="entry name" value="DISINTEGRIN"/>
</dbReference>
<dbReference type="SMART" id="SM00050">
    <property type="entry name" value="DISIN"/>
    <property type="match status" value="1"/>
</dbReference>
<dbReference type="SUPFAM" id="SSF57552">
    <property type="entry name" value="Blood coagulation inhibitor (disintegrin)"/>
    <property type="match status" value="1"/>
</dbReference>
<dbReference type="SUPFAM" id="SSF55486">
    <property type="entry name" value="Metalloproteases ('zincins'), catalytic domain"/>
    <property type="match status" value="1"/>
</dbReference>
<dbReference type="PROSITE" id="PS50215">
    <property type="entry name" value="ADAM_MEPRO"/>
    <property type="match status" value="1"/>
</dbReference>
<dbReference type="PROSITE" id="PS00427">
    <property type="entry name" value="DISINTEGRIN_1"/>
    <property type="match status" value="1"/>
</dbReference>
<dbReference type="PROSITE" id="PS50214">
    <property type="entry name" value="DISINTEGRIN_2"/>
    <property type="match status" value="1"/>
</dbReference>
<dbReference type="PROSITE" id="PS00142">
    <property type="entry name" value="ZINC_PROTEASE"/>
    <property type="match status" value="1"/>
</dbReference>
<accession>P0C6E4</accession>
<name>VM2JN_PROJR</name>